<evidence type="ECO:0000255" key="1">
    <source>
        <dbReference type="HAMAP-Rule" id="MF_00251"/>
    </source>
</evidence>
<evidence type="ECO:0000305" key="2"/>
<accession>A7HBP1</accession>
<organism>
    <name type="scientific">Anaeromyxobacter sp. (strain Fw109-5)</name>
    <dbReference type="NCBI Taxonomy" id="404589"/>
    <lineage>
        <taxon>Bacteria</taxon>
        <taxon>Pseudomonadati</taxon>
        <taxon>Myxococcota</taxon>
        <taxon>Myxococcia</taxon>
        <taxon>Myxococcales</taxon>
        <taxon>Cystobacterineae</taxon>
        <taxon>Anaeromyxobacteraceae</taxon>
        <taxon>Anaeromyxobacter</taxon>
    </lineage>
</organism>
<name>RL36_ANADF</name>
<feature type="chain" id="PRO_1000003396" description="Large ribosomal subunit protein bL36">
    <location>
        <begin position="1"/>
        <end position="38"/>
    </location>
</feature>
<keyword id="KW-1185">Reference proteome</keyword>
<keyword id="KW-0687">Ribonucleoprotein</keyword>
<keyword id="KW-0689">Ribosomal protein</keyword>
<gene>
    <name evidence="1" type="primary">rpmJ</name>
    <name type="ordered locus">Anae109_1934</name>
</gene>
<comment type="similarity">
    <text evidence="1">Belongs to the bacterial ribosomal protein bL36 family.</text>
</comment>
<proteinExistence type="inferred from homology"/>
<protein>
    <recommendedName>
        <fullName evidence="1">Large ribosomal subunit protein bL36</fullName>
    </recommendedName>
    <alternativeName>
        <fullName evidence="2">50S ribosomal protein L36</fullName>
    </alternativeName>
</protein>
<sequence>MKVRASVKKICDKCKVIKRKGTVRIICPANPRHKQRQG</sequence>
<dbReference type="EMBL" id="CP000769">
    <property type="protein sequence ID" value="ABS26137.1"/>
    <property type="molecule type" value="Genomic_DNA"/>
</dbReference>
<dbReference type="RefSeq" id="WP_011420977.1">
    <property type="nucleotide sequence ID" value="NC_009675.1"/>
</dbReference>
<dbReference type="SMR" id="A7HBP1"/>
<dbReference type="STRING" id="404589.Anae109_1934"/>
<dbReference type="KEGG" id="afw:Anae109_1934"/>
<dbReference type="eggNOG" id="COG0257">
    <property type="taxonomic scope" value="Bacteria"/>
</dbReference>
<dbReference type="HOGENOM" id="CLU_135723_6_2_7"/>
<dbReference type="Proteomes" id="UP000006382">
    <property type="component" value="Chromosome"/>
</dbReference>
<dbReference type="GO" id="GO:0005737">
    <property type="term" value="C:cytoplasm"/>
    <property type="evidence" value="ECO:0007669"/>
    <property type="project" value="UniProtKB-ARBA"/>
</dbReference>
<dbReference type="GO" id="GO:1990904">
    <property type="term" value="C:ribonucleoprotein complex"/>
    <property type="evidence" value="ECO:0007669"/>
    <property type="project" value="UniProtKB-KW"/>
</dbReference>
<dbReference type="GO" id="GO:0005840">
    <property type="term" value="C:ribosome"/>
    <property type="evidence" value="ECO:0007669"/>
    <property type="project" value="UniProtKB-KW"/>
</dbReference>
<dbReference type="GO" id="GO:0003735">
    <property type="term" value="F:structural constituent of ribosome"/>
    <property type="evidence" value="ECO:0007669"/>
    <property type="project" value="InterPro"/>
</dbReference>
<dbReference type="GO" id="GO:0006412">
    <property type="term" value="P:translation"/>
    <property type="evidence" value="ECO:0007669"/>
    <property type="project" value="UniProtKB-UniRule"/>
</dbReference>
<dbReference type="HAMAP" id="MF_00251">
    <property type="entry name" value="Ribosomal_bL36"/>
    <property type="match status" value="1"/>
</dbReference>
<dbReference type="InterPro" id="IPR000473">
    <property type="entry name" value="Ribosomal_bL36"/>
</dbReference>
<dbReference type="InterPro" id="IPR035977">
    <property type="entry name" value="Ribosomal_bL36_sp"/>
</dbReference>
<dbReference type="NCBIfam" id="TIGR01022">
    <property type="entry name" value="rpmJ_bact"/>
    <property type="match status" value="1"/>
</dbReference>
<dbReference type="PANTHER" id="PTHR42888">
    <property type="entry name" value="50S RIBOSOMAL PROTEIN L36, CHLOROPLASTIC"/>
    <property type="match status" value="1"/>
</dbReference>
<dbReference type="PANTHER" id="PTHR42888:SF1">
    <property type="entry name" value="LARGE RIBOSOMAL SUBUNIT PROTEIN BL36C"/>
    <property type="match status" value="1"/>
</dbReference>
<dbReference type="Pfam" id="PF00444">
    <property type="entry name" value="Ribosomal_L36"/>
    <property type="match status" value="1"/>
</dbReference>
<dbReference type="SUPFAM" id="SSF57840">
    <property type="entry name" value="Ribosomal protein L36"/>
    <property type="match status" value="1"/>
</dbReference>
<dbReference type="PROSITE" id="PS00828">
    <property type="entry name" value="RIBOSOMAL_L36"/>
    <property type="match status" value="1"/>
</dbReference>
<reference key="1">
    <citation type="journal article" date="2015" name="Genome Announc.">
        <title>Complete genome sequence of Anaeromyxobacter sp. Fw109-5, an anaerobic, metal-reducing bacterium isolated from a contaminated subsurface environment.</title>
        <authorList>
            <person name="Hwang C."/>
            <person name="Copeland A."/>
            <person name="Lucas S."/>
            <person name="Lapidus A."/>
            <person name="Barry K."/>
            <person name="Glavina Del Rio T."/>
            <person name="Dalin E."/>
            <person name="Tice H."/>
            <person name="Pitluck S."/>
            <person name="Sims D."/>
            <person name="Brettin T."/>
            <person name="Bruce D.C."/>
            <person name="Detter J.C."/>
            <person name="Han C.S."/>
            <person name="Schmutz J."/>
            <person name="Larimer F.W."/>
            <person name="Land M.L."/>
            <person name="Hauser L.J."/>
            <person name="Kyrpides N."/>
            <person name="Lykidis A."/>
            <person name="Richardson P."/>
            <person name="Belieav A."/>
            <person name="Sanford R.A."/>
            <person name="Loeffler F.E."/>
            <person name="Fields M.W."/>
        </authorList>
    </citation>
    <scope>NUCLEOTIDE SEQUENCE [LARGE SCALE GENOMIC DNA]</scope>
    <source>
        <strain>Fw109-5</strain>
    </source>
</reference>